<keyword id="KW-0067">ATP-binding</keyword>
<keyword id="KW-0436">Ligase</keyword>
<keyword id="KW-0460">Magnesium</keyword>
<keyword id="KW-0479">Metal-binding</keyword>
<keyword id="KW-0547">Nucleotide-binding</keyword>
<keyword id="KW-1185">Reference proteome</keyword>
<keyword id="KW-0816">Tricarboxylic acid cycle</keyword>
<reference key="1">
    <citation type="journal article" date="2008" name="J. Bacteriol.">
        <title>Complete genome sequence of uropathogenic Proteus mirabilis, a master of both adherence and motility.</title>
        <authorList>
            <person name="Pearson M.M."/>
            <person name="Sebaihia M."/>
            <person name="Churcher C."/>
            <person name="Quail M.A."/>
            <person name="Seshasayee A.S."/>
            <person name="Luscombe N.M."/>
            <person name="Abdellah Z."/>
            <person name="Arrosmith C."/>
            <person name="Atkin B."/>
            <person name="Chillingworth T."/>
            <person name="Hauser H."/>
            <person name="Jagels K."/>
            <person name="Moule S."/>
            <person name="Mungall K."/>
            <person name="Norbertczak H."/>
            <person name="Rabbinowitsch E."/>
            <person name="Walker D."/>
            <person name="Whithead S."/>
            <person name="Thomson N.R."/>
            <person name="Rather P.N."/>
            <person name="Parkhill J."/>
            <person name="Mobley H.L.T."/>
        </authorList>
    </citation>
    <scope>NUCLEOTIDE SEQUENCE [LARGE SCALE GENOMIC DNA]</scope>
    <source>
        <strain>HI4320</strain>
    </source>
</reference>
<protein>
    <recommendedName>
        <fullName evidence="1">Succinate--CoA ligase [ADP-forming] subunit beta</fullName>
        <ecNumber evidence="1">6.2.1.5</ecNumber>
    </recommendedName>
    <alternativeName>
        <fullName evidence="1">Succinyl-CoA synthetase subunit beta</fullName>
        <shortName evidence="1">SCS-beta</shortName>
    </alternativeName>
</protein>
<feature type="chain" id="PRO_1000129210" description="Succinate--CoA ligase [ADP-forming] subunit beta">
    <location>
        <begin position="1"/>
        <end position="388"/>
    </location>
</feature>
<feature type="domain" description="ATP-grasp" evidence="1">
    <location>
        <begin position="9"/>
        <end position="244"/>
    </location>
</feature>
<feature type="binding site" evidence="1">
    <location>
        <position position="46"/>
    </location>
    <ligand>
        <name>ATP</name>
        <dbReference type="ChEBI" id="CHEBI:30616"/>
    </ligand>
</feature>
<feature type="binding site" evidence="1">
    <location>
        <begin position="53"/>
        <end position="55"/>
    </location>
    <ligand>
        <name>ATP</name>
        <dbReference type="ChEBI" id="CHEBI:30616"/>
    </ligand>
</feature>
<feature type="binding site" evidence="1">
    <location>
        <position position="99"/>
    </location>
    <ligand>
        <name>ATP</name>
        <dbReference type="ChEBI" id="CHEBI:30616"/>
    </ligand>
</feature>
<feature type="binding site" evidence="1">
    <location>
        <position position="102"/>
    </location>
    <ligand>
        <name>ATP</name>
        <dbReference type="ChEBI" id="CHEBI:30616"/>
    </ligand>
</feature>
<feature type="binding site" evidence="1">
    <location>
        <position position="107"/>
    </location>
    <ligand>
        <name>ATP</name>
        <dbReference type="ChEBI" id="CHEBI:30616"/>
    </ligand>
</feature>
<feature type="binding site" evidence="1">
    <location>
        <position position="199"/>
    </location>
    <ligand>
        <name>Mg(2+)</name>
        <dbReference type="ChEBI" id="CHEBI:18420"/>
    </ligand>
</feature>
<feature type="binding site" evidence="1">
    <location>
        <position position="213"/>
    </location>
    <ligand>
        <name>Mg(2+)</name>
        <dbReference type="ChEBI" id="CHEBI:18420"/>
    </ligand>
</feature>
<feature type="binding site" evidence="1">
    <location>
        <position position="264"/>
    </location>
    <ligand>
        <name>substrate</name>
        <note>ligand shared with subunit alpha</note>
    </ligand>
</feature>
<feature type="binding site" evidence="1">
    <location>
        <begin position="321"/>
        <end position="323"/>
    </location>
    <ligand>
        <name>substrate</name>
        <note>ligand shared with subunit alpha</note>
    </ligand>
</feature>
<proteinExistence type="inferred from homology"/>
<accession>B4ESR1</accession>
<evidence type="ECO:0000255" key="1">
    <source>
        <dbReference type="HAMAP-Rule" id="MF_00558"/>
    </source>
</evidence>
<organism>
    <name type="scientific">Proteus mirabilis (strain HI4320)</name>
    <dbReference type="NCBI Taxonomy" id="529507"/>
    <lineage>
        <taxon>Bacteria</taxon>
        <taxon>Pseudomonadati</taxon>
        <taxon>Pseudomonadota</taxon>
        <taxon>Gammaproteobacteria</taxon>
        <taxon>Enterobacterales</taxon>
        <taxon>Morganellaceae</taxon>
        <taxon>Proteus</taxon>
    </lineage>
</organism>
<gene>
    <name evidence="1" type="primary">sucC</name>
    <name type="ordered locus">PMI0571</name>
</gene>
<name>SUCC_PROMH</name>
<dbReference type="EC" id="6.2.1.5" evidence="1"/>
<dbReference type="EMBL" id="AM942759">
    <property type="protein sequence ID" value="CAR41369.1"/>
    <property type="molecule type" value="Genomic_DNA"/>
</dbReference>
<dbReference type="RefSeq" id="WP_004244420.1">
    <property type="nucleotide sequence ID" value="NC_010554.1"/>
</dbReference>
<dbReference type="SMR" id="B4ESR1"/>
<dbReference type="EnsemblBacteria" id="CAR41369">
    <property type="protein sequence ID" value="CAR41369"/>
    <property type="gene ID" value="PMI0571"/>
</dbReference>
<dbReference type="GeneID" id="6801247"/>
<dbReference type="KEGG" id="pmr:PMI0571"/>
<dbReference type="eggNOG" id="COG0045">
    <property type="taxonomic scope" value="Bacteria"/>
</dbReference>
<dbReference type="HOGENOM" id="CLU_037430_0_2_6"/>
<dbReference type="UniPathway" id="UPA00223">
    <property type="reaction ID" value="UER00999"/>
</dbReference>
<dbReference type="Proteomes" id="UP000008319">
    <property type="component" value="Chromosome"/>
</dbReference>
<dbReference type="GO" id="GO:0005829">
    <property type="term" value="C:cytosol"/>
    <property type="evidence" value="ECO:0007669"/>
    <property type="project" value="TreeGrafter"/>
</dbReference>
<dbReference type="GO" id="GO:0042709">
    <property type="term" value="C:succinate-CoA ligase complex"/>
    <property type="evidence" value="ECO:0007669"/>
    <property type="project" value="TreeGrafter"/>
</dbReference>
<dbReference type="GO" id="GO:0005524">
    <property type="term" value="F:ATP binding"/>
    <property type="evidence" value="ECO:0007669"/>
    <property type="project" value="UniProtKB-UniRule"/>
</dbReference>
<dbReference type="GO" id="GO:0000287">
    <property type="term" value="F:magnesium ion binding"/>
    <property type="evidence" value="ECO:0007669"/>
    <property type="project" value="UniProtKB-UniRule"/>
</dbReference>
<dbReference type="GO" id="GO:0004775">
    <property type="term" value="F:succinate-CoA ligase (ADP-forming) activity"/>
    <property type="evidence" value="ECO:0007669"/>
    <property type="project" value="UniProtKB-UniRule"/>
</dbReference>
<dbReference type="GO" id="GO:0004776">
    <property type="term" value="F:succinate-CoA ligase (GDP-forming) activity"/>
    <property type="evidence" value="ECO:0007669"/>
    <property type="project" value="RHEA"/>
</dbReference>
<dbReference type="GO" id="GO:0006104">
    <property type="term" value="P:succinyl-CoA metabolic process"/>
    <property type="evidence" value="ECO:0007669"/>
    <property type="project" value="TreeGrafter"/>
</dbReference>
<dbReference type="GO" id="GO:0006099">
    <property type="term" value="P:tricarboxylic acid cycle"/>
    <property type="evidence" value="ECO:0007669"/>
    <property type="project" value="UniProtKB-UniRule"/>
</dbReference>
<dbReference type="FunFam" id="3.30.1490.20:FF:000002">
    <property type="entry name" value="Succinate--CoA ligase [ADP-forming] subunit beta"/>
    <property type="match status" value="1"/>
</dbReference>
<dbReference type="FunFam" id="3.30.470.20:FF:000002">
    <property type="entry name" value="Succinate--CoA ligase [ADP-forming] subunit beta"/>
    <property type="match status" value="1"/>
</dbReference>
<dbReference type="FunFam" id="3.40.50.261:FF:000001">
    <property type="entry name" value="Succinate--CoA ligase [ADP-forming] subunit beta"/>
    <property type="match status" value="1"/>
</dbReference>
<dbReference type="Gene3D" id="3.30.1490.20">
    <property type="entry name" value="ATP-grasp fold, A domain"/>
    <property type="match status" value="1"/>
</dbReference>
<dbReference type="Gene3D" id="3.30.470.20">
    <property type="entry name" value="ATP-grasp fold, B domain"/>
    <property type="match status" value="1"/>
</dbReference>
<dbReference type="Gene3D" id="3.40.50.261">
    <property type="entry name" value="Succinyl-CoA synthetase domains"/>
    <property type="match status" value="1"/>
</dbReference>
<dbReference type="HAMAP" id="MF_00558">
    <property type="entry name" value="Succ_CoA_beta"/>
    <property type="match status" value="1"/>
</dbReference>
<dbReference type="InterPro" id="IPR011761">
    <property type="entry name" value="ATP-grasp"/>
</dbReference>
<dbReference type="InterPro" id="IPR013650">
    <property type="entry name" value="ATP-grasp_succ-CoA_synth-type"/>
</dbReference>
<dbReference type="InterPro" id="IPR013815">
    <property type="entry name" value="ATP_grasp_subdomain_1"/>
</dbReference>
<dbReference type="InterPro" id="IPR017866">
    <property type="entry name" value="Succ-CoA_synthase_bsu_CS"/>
</dbReference>
<dbReference type="InterPro" id="IPR005811">
    <property type="entry name" value="SUCC_ACL_C"/>
</dbReference>
<dbReference type="InterPro" id="IPR005809">
    <property type="entry name" value="Succ_CoA_ligase-like_bsu"/>
</dbReference>
<dbReference type="InterPro" id="IPR016102">
    <property type="entry name" value="Succinyl-CoA_synth-like"/>
</dbReference>
<dbReference type="NCBIfam" id="NF001913">
    <property type="entry name" value="PRK00696.1"/>
    <property type="match status" value="1"/>
</dbReference>
<dbReference type="NCBIfam" id="TIGR01016">
    <property type="entry name" value="sucCoAbeta"/>
    <property type="match status" value="1"/>
</dbReference>
<dbReference type="PANTHER" id="PTHR11815:SF10">
    <property type="entry name" value="SUCCINATE--COA LIGASE [GDP-FORMING] SUBUNIT BETA, MITOCHONDRIAL"/>
    <property type="match status" value="1"/>
</dbReference>
<dbReference type="PANTHER" id="PTHR11815">
    <property type="entry name" value="SUCCINYL-COA SYNTHETASE BETA CHAIN"/>
    <property type="match status" value="1"/>
</dbReference>
<dbReference type="Pfam" id="PF08442">
    <property type="entry name" value="ATP-grasp_2"/>
    <property type="match status" value="1"/>
</dbReference>
<dbReference type="Pfam" id="PF00549">
    <property type="entry name" value="Ligase_CoA"/>
    <property type="match status" value="1"/>
</dbReference>
<dbReference type="PIRSF" id="PIRSF001554">
    <property type="entry name" value="SucCS_beta"/>
    <property type="match status" value="1"/>
</dbReference>
<dbReference type="SUPFAM" id="SSF56059">
    <property type="entry name" value="Glutathione synthetase ATP-binding domain-like"/>
    <property type="match status" value="1"/>
</dbReference>
<dbReference type="SUPFAM" id="SSF52210">
    <property type="entry name" value="Succinyl-CoA synthetase domains"/>
    <property type="match status" value="1"/>
</dbReference>
<dbReference type="PROSITE" id="PS50975">
    <property type="entry name" value="ATP_GRASP"/>
    <property type="match status" value="1"/>
</dbReference>
<dbReference type="PROSITE" id="PS01217">
    <property type="entry name" value="SUCCINYL_COA_LIG_3"/>
    <property type="match status" value="1"/>
</dbReference>
<sequence length="388" mass="41532">MNLHEYQAKQLFSRYGLPAPAGFACSTPREAEEAASKIGQGPWVVKCQVHAGGRGKAGGVKVVNSKEEIRAFAEQWLGKRLVTYQTDANGQPVTQILVEAATDIAKELYLGAVVDRGTRRVVFMASTEGGVEIEKVAEETPELIHRAIIDPLTGPMPYQGRELAFKLGLKGKQVSQFAKIFMGLATIFLERDLALIEINPLVITKDDDLICLDGKLGVDSNALFRQPEMREMHDPSQEDPREAQAAQWELNYVALDGNIGCMVNGAGLAMGTMDIVKLHGGEPANFLDVGGGATKERVTEAFKIILSDENVSAVLVNIFGGIVRCDLIADGIIGAVEEVGVNVPVVVRLEGNNAELGTKKLADSGLNIIAAKSLTDAAKQVVAAAEAK</sequence>
<comment type="function">
    <text evidence="1">Succinyl-CoA synthetase functions in the citric acid cycle (TCA), coupling the hydrolysis of succinyl-CoA to the synthesis of either ATP or GTP and thus represents the only step of substrate-level phosphorylation in the TCA. The beta subunit provides nucleotide specificity of the enzyme and binds the substrate succinate, while the binding sites for coenzyme A and phosphate are found in the alpha subunit.</text>
</comment>
<comment type="catalytic activity">
    <reaction evidence="1">
        <text>succinate + ATP + CoA = succinyl-CoA + ADP + phosphate</text>
        <dbReference type="Rhea" id="RHEA:17661"/>
        <dbReference type="ChEBI" id="CHEBI:30031"/>
        <dbReference type="ChEBI" id="CHEBI:30616"/>
        <dbReference type="ChEBI" id="CHEBI:43474"/>
        <dbReference type="ChEBI" id="CHEBI:57287"/>
        <dbReference type="ChEBI" id="CHEBI:57292"/>
        <dbReference type="ChEBI" id="CHEBI:456216"/>
        <dbReference type="EC" id="6.2.1.5"/>
    </reaction>
    <physiologicalReaction direction="right-to-left" evidence="1">
        <dbReference type="Rhea" id="RHEA:17663"/>
    </physiologicalReaction>
</comment>
<comment type="catalytic activity">
    <reaction evidence="1">
        <text>GTP + succinate + CoA = succinyl-CoA + GDP + phosphate</text>
        <dbReference type="Rhea" id="RHEA:22120"/>
        <dbReference type="ChEBI" id="CHEBI:30031"/>
        <dbReference type="ChEBI" id="CHEBI:37565"/>
        <dbReference type="ChEBI" id="CHEBI:43474"/>
        <dbReference type="ChEBI" id="CHEBI:57287"/>
        <dbReference type="ChEBI" id="CHEBI:57292"/>
        <dbReference type="ChEBI" id="CHEBI:58189"/>
    </reaction>
    <physiologicalReaction direction="right-to-left" evidence="1">
        <dbReference type="Rhea" id="RHEA:22122"/>
    </physiologicalReaction>
</comment>
<comment type="cofactor">
    <cofactor evidence="1">
        <name>Mg(2+)</name>
        <dbReference type="ChEBI" id="CHEBI:18420"/>
    </cofactor>
    <text evidence="1">Binds 1 Mg(2+) ion per subunit.</text>
</comment>
<comment type="pathway">
    <text evidence="1">Carbohydrate metabolism; tricarboxylic acid cycle; succinate from succinyl-CoA (ligase route): step 1/1.</text>
</comment>
<comment type="subunit">
    <text evidence="1">Heterotetramer of two alpha and two beta subunits.</text>
</comment>
<comment type="similarity">
    <text evidence="1">Belongs to the succinate/malate CoA ligase beta subunit family.</text>
</comment>